<reference key="1">
    <citation type="journal article" date="1996" name="J. Biol. Chem.">
        <title>The calmodulin-dependent phosphodiesterase gene PDE1C encodes several functionally different splice variants in a tissue-specific manner.</title>
        <authorList>
            <person name="Yan C."/>
            <person name="Zhao A.Z."/>
            <person name="Bentley J.K."/>
            <person name="Beavo J.A."/>
        </authorList>
    </citation>
    <scope>NUCLEOTIDE SEQUENCE [MRNA] (ISOFORMS 1 AND 2)</scope>
    <scope>FUNCTION</scope>
    <scope>CATALYTIC ACTIVITY</scope>
    <scope>BIOPHYSICOCHEMICAL PROPERTIES</scope>
    <scope>TISSUE SPECIFICITY</scope>
    <source>
        <strain>BALB/cJ</strain>
        <tissue>Brain</tissue>
    </source>
</reference>
<reference key="2">
    <citation type="journal article" date="2005" name="Science">
        <title>The transcriptional landscape of the mammalian genome.</title>
        <authorList>
            <person name="Carninci P."/>
            <person name="Kasukawa T."/>
            <person name="Katayama S."/>
            <person name="Gough J."/>
            <person name="Frith M.C."/>
            <person name="Maeda N."/>
            <person name="Oyama R."/>
            <person name="Ravasi T."/>
            <person name="Lenhard B."/>
            <person name="Wells C."/>
            <person name="Kodzius R."/>
            <person name="Shimokawa K."/>
            <person name="Bajic V.B."/>
            <person name="Brenner S.E."/>
            <person name="Batalov S."/>
            <person name="Forrest A.R."/>
            <person name="Zavolan M."/>
            <person name="Davis M.J."/>
            <person name="Wilming L.G."/>
            <person name="Aidinis V."/>
            <person name="Allen J.E."/>
            <person name="Ambesi-Impiombato A."/>
            <person name="Apweiler R."/>
            <person name="Aturaliya R.N."/>
            <person name="Bailey T.L."/>
            <person name="Bansal M."/>
            <person name="Baxter L."/>
            <person name="Beisel K.W."/>
            <person name="Bersano T."/>
            <person name="Bono H."/>
            <person name="Chalk A.M."/>
            <person name="Chiu K.P."/>
            <person name="Choudhary V."/>
            <person name="Christoffels A."/>
            <person name="Clutterbuck D.R."/>
            <person name="Crowe M.L."/>
            <person name="Dalla E."/>
            <person name="Dalrymple B.P."/>
            <person name="de Bono B."/>
            <person name="Della Gatta G."/>
            <person name="di Bernardo D."/>
            <person name="Down T."/>
            <person name="Engstrom P."/>
            <person name="Fagiolini M."/>
            <person name="Faulkner G."/>
            <person name="Fletcher C.F."/>
            <person name="Fukushima T."/>
            <person name="Furuno M."/>
            <person name="Futaki S."/>
            <person name="Gariboldi M."/>
            <person name="Georgii-Hemming P."/>
            <person name="Gingeras T.R."/>
            <person name="Gojobori T."/>
            <person name="Green R.E."/>
            <person name="Gustincich S."/>
            <person name="Harbers M."/>
            <person name="Hayashi Y."/>
            <person name="Hensch T.K."/>
            <person name="Hirokawa N."/>
            <person name="Hill D."/>
            <person name="Huminiecki L."/>
            <person name="Iacono M."/>
            <person name="Ikeo K."/>
            <person name="Iwama A."/>
            <person name="Ishikawa T."/>
            <person name="Jakt M."/>
            <person name="Kanapin A."/>
            <person name="Katoh M."/>
            <person name="Kawasawa Y."/>
            <person name="Kelso J."/>
            <person name="Kitamura H."/>
            <person name="Kitano H."/>
            <person name="Kollias G."/>
            <person name="Krishnan S.P."/>
            <person name="Kruger A."/>
            <person name="Kummerfeld S.K."/>
            <person name="Kurochkin I.V."/>
            <person name="Lareau L.F."/>
            <person name="Lazarevic D."/>
            <person name="Lipovich L."/>
            <person name="Liu J."/>
            <person name="Liuni S."/>
            <person name="McWilliam S."/>
            <person name="Madan Babu M."/>
            <person name="Madera M."/>
            <person name="Marchionni L."/>
            <person name="Matsuda H."/>
            <person name="Matsuzawa S."/>
            <person name="Miki H."/>
            <person name="Mignone F."/>
            <person name="Miyake S."/>
            <person name="Morris K."/>
            <person name="Mottagui-Tabar S."/>
            <person name="Mulder N."/>
            <person name="Nakano N."/>
            <person name="Nakauchi H."/>
            <person name="Ng P."/>
            <person name="Nilsson R."/>
            <person name="Nishiguchi S."/>
            <person name="Nishikawa S."/>
            <person name="Nori F."/>
            <person name="Ohara O."/>
            <person name="Okazaki Y."/>
            <person name="Orlando V."/>
            <person name="Pang K.C."/>
            <person name="Pavan W.J."/>
            <person name="Pavesi G."/>
            <person name="Pesole G."/>
            <person name="Petrovsky N."/>
            <person name="Piazza S."/>
            <person name="Reed J."/>
            <person name="Reid J.F."/>
            <person name="Ring B.Z."/>
            <person name="Ringwald M."/>
            <person name="Rost B."/>
            <person name="Ruan Y."/>
            <person name="Salzberg S.L."/>
            <person name="Sandelin A."/>
            <person name="Schneider C."/>
            <person name="Schoenbach C."/>
            <person name="Sekiguchi K."/>
            <person name="Semple C.A."/>
            <person name="Seno S."/>
            <person name="Sessa L."/>
            <person name="Sheng Y."/>
            <person name="Shibata Y."/>
            <person name="Shimada H."/>
            <person name="Shimada K."/>
            <person name="Silva D."/>
            <person name="Sinclair B."/>
            <person name="Sperling S."/>
            <person name="Stupka E."/>
            <person name="Sugiura K."/>
            <person name="Sultana R."/>
            <person name="Takenaka Y."/>
            <person name="Taki K."/>
            <person name="Tammoja K."/>
            <person name="Tan S.L."/>
            <person name="Tang S."/>
            <person name="Taylor M.S."/>
            <person name="Tegner J."/>
            <person name="Teichmann S.A."/>
            <person name="Ueda H.R."/>
            <person name="van Nimwegen E."/>
            <person name="Verardo R."/>
            <person name="Wei C.L."/>
            <person name="Yagi K."/>
            <person name="Yamanishi H."/>
            <person name="Zabarovsky E."/>
            <person name="Zhu S."/>
            <person name="Zimmer A."/>
            <person name="Hide W."/>
            <person name="Bult C."/>
            <person name="Grimmond S.M."/>
            <person name="Teasdale R.D."/>
            <person name="Liu E.T."/>
            <person name="Brusic V."/>
            <person name="Quackenbush J."/>
            <person name="Wahlestedt C."/>
            <person name="Mattick J.S."/>
            <person name="Hume D.A."/>
            <person name="Kai C."/>
            <person name="Sasaki D."/>
            <person name="Tomaru Y."/>
            <person name="Fukuda S."/>
            <person name="Kanamori-Katayama M."/>
            <person name="Suzuki M."/>
            <person name="Aoki J."/>
            <person name="Arakawa T."/>
            <person name="Iida J."/>
            <person name="Imamura K."/>
            <person name="Itoh M."/>
            <person name="Kato T."/>
            <person name="Kawaji H."/>
            <person name="Kawagashira N."/>
            <person name="Kawashima T."/>
            <person name="Kojima M."/>
            <person name="Kondo S."/>
            <person name="Konno H."/>
            <person name="Nakano K."/>
            <person name="Ninomiya N."/>
            <person name="Nishio T."/>
            <person name="Okada M."/>
            <person name="Plessy C."/>
            <person name="Shibata K."/>
            <person name="Shiraki T."/>
            <person name="Suzuki S."/>
            <person name="Tagami M."/>
            <person name="Waki K."/>
            <person name="Watahiki A."/>
            <person name="Okamura-Oho Y."/>
            <person name="Suzuki H."/>
            <person name="Kawai J."/>
            <person name="Hayashizaki Y."/>
        </authorList>
    </citation>
    <scope>NUCLEOTIDE SEQUENCE [LARGE SCALE MRNA] (ISOFORM 3)</scope>
    <source>
        <strain>C57BL/6J</strain>
        <tissue>Pituitary</tissue>
    </source>
</reference>
<reference key="3">
    <citation type="journal article" date="2010" name="Cell">
        <title>A tissue-specific atlas of mouse protein phosphorylation and expression.</title>
        <authorList>
            <person name="Huttlin E.L."/>
            <person name="Jedrychowski M.P."/>
            <person name="Elias J.E."/>
            <person name="Goswami T."/>
            <person name="Rad R."/>
            <person name="Beausoleil S.A."/>
            <person name="Villen J."/>
            <person name="Haas W."/>
            <person name="Sowa M.E."/>
            <person name="Gygi S.P."/>
        </authorList>
    </citation>
    <scope>IDENTIFICATION BY MASS SPECTROMETRY [LARGE SCALE ANALYSIS]</scope>
    <source>
        <tissue>Heart</tissue>
        <tissue>Testis</tissue>
    </source>
</reference>
<reference key="4">
    <citation type="journal article" date="2018" name="Hum. Genet.">
        <title>A dominant variant in the PDE1C gene is associated with nonsyndromic hearing loss.</title>
        <authorList>
            <person name="Wang L."/>
            <person name="Feng Y."/>
            <person name="Yan D."/>
            <person name="Qin L."/>
            <person name="Grati M."/>
            <person name="Mittal R."/>
            <person name="Li T."/>
            <person name="Sundhari A.K."/>
            <person name="Liu Y."/>
            <person name="Chapagain P."/>
            <person name="Blanton S.H."/>
            <person name="Liao S."/>
            <person name="Liu X."/>
        </authorList>
    </citation>
    <scope>FUNCTION</scope>
    <scope>SUBCELLULAR LOCATION</scope>
    <scope>TISSUE SPECIFICITY</scope>
</reference>
<keyword id="KW-0007">Acetylation</keyword>
<keyword id="KW-0025">Alternative splicing</keyword>
<keyword id="KW-0112">Calmodulin-binding</keyword>
<keyword id="KW-0114">cAMP</keyword>
<keyword id="KW-0140">cGMP</keyword>
<keyword id="KW-0378">Hydrolase</keyword>
<keyword id="KW-0458">Lysosome</keyword>
<keyword id="KW-0460">Magnesium</keyword>
<keyword id="KW-0479">Metal-binding</keyword>
<keyword id="KW-1185">Reference proteome</keyword>
<keyword id="KW-0862">Zinc</keyword>
<gene>
    <name evidence="13" type="primary">Pde1c</name>
</gene>
<evidence type="ECO:0000250" key="1">
    <source>
        <dbReference type="UniProtKB" id="O76083"/>
    </source>
</evidence>
<evidence type="ECO:0000250" key="2">
    <source>
        <dbReference type="UniProtKB" id="P14100"/>
    </source>
</evidence>
<evidence type="ECO:0000250" key="3">
    <source>
        <dbReference type="UniProtKB" id="Q01064"/>
    </source>
</evidence>
<evidence type="ECO:0000250" key="4">
    <source>
        <dbReference type="UniProtKB" id="Q14123"/>
    </source>
</evidence>
<evidence type="ECO:0000255" key="5">
    <source>
        <dbReference type="PROSITE-ProRule" id="PRU01192"/>
    </source>
</evidence>
<evidence type="ECO:0000256" key="6">
    <source>
        <dbReference type="SAM" id="MobiDB-lite"/>
    </source>
</evidence>
<evidence type="ECO:0000269" key="7">
    <source>
    </source>
</evidence>
<evidence type="ECO:0000269" key="8">
    <source>
    </source>
</evidence>
<evidence type="ECO:0000303" key="9">
    <source>
    </source>
</evidence>
<evidence type="ECO:0000305" key="10"/>
<evidence type="ECO:0000305" key="11">
    <source>
    </source>
</evidence>
<evidence type="ECO:0000305" key="12">
    <source>
    </source>
</evidence>
<evidence type="ECO:0000312" key="13">
    <source>
        <dbReference type="MGI" id="MGI:108413"/>
    </source>
</evidence>
<comment type="function">
    <text evidence="4 8 11">Calmodulin-dependent cyclic nucleotide phosphodiesterase with a dual specificity for cAMP and cGMP, which are key regulators of many important physiological processes (PubMed:8810348). Exhibits high affinity for both cAMP and cGMP (By similarity). Modulates the amplitude and duration of the cAMP signal in sensory cilia in response to odorant stimulation, hence contributing to the generation of action potentials. Regulates smooth muscle cell proliferation. Regulates the stability of growth factor receptors, including PDGFRB (Probable).</text>
</comment>
<comment type="catalytic activity">
    <reaction evidence="8">
        <text>a nucleoside 3',5'-cyclic phosphate + H2O = a nucleoside 5'-phosphate + H(+)</text>
        <dbReference type="Rhea" id="RHEA:14653"/>
        <dbReference type="ChEBI" id="CHEBI:15377"/>
        <dbReference type="ChEBI" id="CHEBI:15378"/>
        <dbReference type="ChEBI" id="CHEBI:57867"/>
        <dbReference type="ChEBI" id="CHEBI:58464"/>
        <dbReference type="EC" id="3.1.4.17"/>
    </reaction>
    <physiologicalReaction direction="left-to-right" evidence="12">
        <dbReference type="Rhea" id="RHEA:14654"/>
    </physiologicalReaction>
</comment>
<comment type="catalytic activity">
    <reaction evidence="8">
        <text>3',5'-cyclic GMP + H2O = GMP + H(+)</text>
        <dbReference type="Rhea" id="RHEA:16957"/>
        <dbReference type="ChEBI" id="CHEBI:15377"/>
        <dbReference type="ChEBI" id="CHEBI:15378"/>
        <dbReference type="ChEBI" id="CHEBI:57746"/>
        <dbReference type="ChEBI" id="CHEBI:58115"/>
    </reaction>
    <physiologicalReaction direction="left-to-right" evidence="12">
        <dbReference type="Rhea" id="RHEA:16958"/>
    </physiologicalReaction>
</comment>
<comment type="catalytic activity">
    <reaction evidence="8">
        <text>3',5'-cyclic AMP + H2O = AMP + H(+)</text>
        <dbReference type="Rhea" id="RHEA:25277"/>
        <dbReference type="ChEBI" id="CHEBI:15377"/>
        <dbReference type="ChEBI" id="CHEBI:15378"/>
        <dbReference type="ChEBI" id="CHEBI:58165"/>
        <dbReference type="ChEBI" id="CHEBI:456215"/>
    </reaction>
    <physiologicalReaction direction="left-to-right" evidence="12">
        <dbReference type="Rhea" id="RHEA:25278"/>
    </physiologicalReaction>
</comment>
<comment type="cofactor">
    <cofactor evidence="3">
        <name>Zn(2+)</name>
        <dbReference type="ChEBI" id="CHEBI:29105"/>
    </cofactor>
    <text evidence="3">Binds 2 divalent metal cations per subunit. Site 1 may preferentially bind zinc ions.</text>
</comment>
<comment type="cofactor">
    <cofactor evidence="3">
        <name>Mg(2+)</name>
        <dbReference type="ChEBI" id="CHEBI:18420"/>
    </cofactor>
    <text evidence="3">Binds 2 divalent metal cations per subunit. Site 2 has a preference for magnesium ions.</text>
</comment>
<comment type="activity regulation">
    <text evidence="8">Type I PDE are activated by the binding of calmodulin in the presence of Ca(2+) (PubMed:8810348). Different splice variants may have different sensitivities to Ca(2+) (PubMed:8810348).</text>
</comment>
<comment type="activity regulation">
    <molecule>Isoform 3</molecule>
    <text evidence="8">Exhibits a higher sensitivity to Ca(2+) stimulation than isoforms 1 and 2 (PubMed:8810348).</text>
</comment>
<comment type="biophysicochemical properties">
    <molecule>Isoform 1</molecule>
    <kinetics>
        <KM evidence="8">1.1 uM for 3',5'-cyclic AMP (isoform 1)</KM>
        <KM evidence="8">1 uM for 3',5'-cyclic GMP (isoform 1)</KM>
    </kinetics>
</comment>
<comment type="biophysicochemical properties">
    <molecule>Isoform 2</molecule>
    <kinetics>
        <KM evidence="8">3.5 uM for 3',5'-cyclic AMP (isoform 2)</KM>
        <KM evidence="8">2.2 uM for 3',5'-cyclic GMP (isoform 2)</KM>
    </kinetics>
</comment>
<comment type="subunit">
    <text evidence="2">Homodimer.</text>
</comment>
<comment type="subcellular location">
    <subcellularLocation>
        <location evidence="7">Lysosome</location>
    </subcellularLocation>
</comment>
<comment type="alternative products">
    <event type="alternative splicing"/>
    <isoform>
        <id>Q64338-3</id>
        <name>3</name>
        <name evidence="9">PDE1C2</name>
        <sequence type="displayed"/>
    </isoform>
    <isoform>
        <id>Q64338-1</id>
        <name>1</name>
        <name evidence="9">PDE1C4</name>
        <name evidence="9">PDE1C5</name>
        <sequence type="described" ref="VSP_012381 VSP_012382"/>
    </isoform>
    <isoform>
        <id>Q64338-2</id>
        <name>2</name>
        <name evidence="9">PDE1C1</name>
        <sequence type="described" ref="VSP_004554 VSP_012380"/>
    </isoform>
</comment>
<comment type="tissue specificity">
    <molecule>Isoform 1</molecule>
    <text evidence="8">Highly expressed in testis and at moderate levels in heart.</text>
</comment>
<comment type="tissue specificity">
    <molecule>Isoform 2</molecule>
    <text evidence="8">Expressed at a moderate level in brain, the cerebellum, testis, heart and olfactory epithelium.</text>
</comment>
<comment type="tissue specificity">
    <molecule>Isoform 3</molecule>
    <text evidence="7 8">Highly expressed in olfactory epithelium and at very low levels, if any, in other tissues (PubMed:8810348). In the cochlea, expressed in the inner and outer hair cells (at protein level) (PubMed:29860631). In the brain, highly expressed in the neurons of the granule layer of the cerebellum, some Purkinje cells, the central amygdaloid nucleus, and the interpolar spinal trigem nucleus and, at moderate levels, in the glomerular and external plexiform layer of the olfactory bulb as well as in parts of the caudate-putamen and olfactory tubercle (PubMed:8810348).</text>
</comment>
<comment type="miscellaneous">
    <molecule>Isoform 1</molecule>
    <text evidence="12">PDE1C4 and PDE1C5 isoforms differ at the level of the 3'-UTR.</text>
</comment>
<comment type="similarity">
    <text evidence="10">Belongs to the cyclic nucleotide phosphodiesterase family. PDE1 subfamily.</text>
</comment>
<proteinExistence type="evidence at protein level"/>
<feature type="chain" id="PRO_0000198793" description="Dual specificity calcium/calmodulin-dependent 3',5'-cyclic nucleotide phosphodiesterase 1C">
    <location>
        <begin position="1"/>
        <end position="706"/>
    </location>
</feature>
<feature type="domain" description="PDEase" evidence="5">
    <location>
        <begin position="151"/>
        <end position="528"/>
    </location>
</feature>
<feature type="region of interest" description="Calmodulin-binding" evidence="2">
    <location>
        <begin position="123"/>
        <end position="146"/>
    </location>
</feature>
<feature type="region of interest" description="Disordered" evidence="6">
    <location>
        <begin position="453"/>
        <end position="497"/>
    </location>
</feature>
<feature type="region of interest" description="Disordered" evidence="6">
    <location>
        <begin position="524"/>
        <end position="655"/>
    </location>
</feature>
<feature type="compositionally biased region" description="Polar residues" evidence="6">
    <location>
        <begin position="456"/>
        <end position="476"/>
    </location>
</feature>
<feature type="compositionally biased region" description="Polar residues" evidence="6">
    <location>
        <begin position="483"/>
        <end position="497"/>
    </location>
</feature>
<feature type="compositionally biased region" description="Basic and acidic residues" evidence="6">
    <location>
        <begin position="524"/>
        <end position="554"/>
    </location>
</feature>
<feature type="compositionally biased region" description="Basic and acidic residues" evidence="6">
    <location>
        <begin position="580"/>
        <end position="597"/>
    </location>
</feature>
<feature type="compositionally biased region" description="Basic and acidic residues" evidence="6">
    <location>
        <begin position="603"/>
        <end position="630"/>
    </location>
</feature>
<feature type="compositionally biased region" description="Polar residues" evidence="6">
    <location>
        <begin position="638"/>
        <end position="647"/>
    </location>
</feature>
<feature type="active site" description="Proton donor" evidence="1">
    <location>
        <position position="228"/>
    </location>
</feature>
<feature type="binding site" evidence="3">
    <location>
        <position position="232"/>
    </location>
    <ligand>
        <name>Zn(2+)</name>
        <dbReference type="ChEBI" id="CHEBI:29105"/>
    </ligand>
</feature>
<feature type="binding site" evidence="3">
    <location>
        <position position="268"/>
    </location>
    <ligand>
        <name>Zn(2+)</name>
        <dbReference type="ChEBI" id="CHEBI:29105"/>
    </ligand>
</feature>
<feature type="binding site" evidence="3">
    <location>
        <position position="269"/>
    </location>
    <ligand>
        <name>Mg(2+)</name>
        <dbReference type="ChEBI" id="CHEBI:18420"/>
    </ligand>
</feature>
<feature type="binding site" evidence="3">
    <location>
        <position position="269"/>
    </location>
    <ligand>
        <name>Zn(2+)</name>
        <dbReference type="ChEBI" id="CHEBI:29105"/>
    </ligand>
</feature>
<feature type="binding site" evidence="3">
    <location>
        <position position="376"/>
    </location>
    <ligand>
        <name>Zn(2+)</name>
        <dbReference type="ChEBI" id="CHEBI:29105"/>
    </ligand>
</feature>
<feature type="modified residue" description="N-acetylmethionine" evidence="4">
    <location>
        <position position="1"/>
    </location>
</feature>
<feature type="splice variant" id="VSP_004554" description="In isoform 2." evidence="9">
    <original>GTKK</original>
    <variation>DPEE</variation>
    <location>
        <begin position="628"/>
        <end position="631"/>
    </location>
</feature>
<feature type="splice variant" id="VSP_012380" description="In isoform 2." evidence="9">
    <location>
        <begin position="632"/>
        <end position="706"/>
    </location>
</feature>
<feature type="splice variant" id="VSP_012381" description="In isoform 1." evidence="9">
    <original>VIKP</original>
    <variation>GDYG</variation>
    <location>
        <begin position="651"/>
        <end position="654"/>
    </location>
</feature>
<feature type="splice variant" id="VSP_012382" description="In isoform 1." evidence="9">
    <location>
        <begin position="655"/>
        <end position="706"/>
    </location>
</feature>
<protein>
    <recommendedName>
        <fullName evidence="12">Dual specificity calcium/calmodulin-dependent 3',5'-cyclic nucleotide phosphodiesterase 1C</fullName>
        <shortName>Cam-PDE 1C</shortName>
        <ecNumber evidence="8">3.1.4.17</ecNumber>
    </recommendedName>
</protein>
<accession>Q64338</accession>
<accession>Q62045</accession>
<accession>Q8BSV6</accession>
<dbReference type="EC" id="3.1.4.17" evidence="8"/>
<dbReference type="EMBL" id="L76947">
    <property type="protein sequence ID" value="AAC37702.1"/>
    <property type="molecule type" value="mRNA"/>
</dbReference>
<dbReference type="EMBL" id="L76946">
    <property type="protein sequence ID" value="AAC37703.1"/>
    <property type="molecule type" value="mRNA"/>
</dbReference>
<dbReference type="EMBL" id="L76944">
    <property type="protein sequence ID" value="AAC37701.1"/>
    <property type="molecule type" value="mRNA"/>
</dbReference>
<dbReference type="EMBL" id="AK030423">
    <property type="protein sequence ID" value="BAC26956.1"/>
    <property type="molecule type" value="mRNA"/>
</dbReference>
<dbReference type="CCDS" id="CCDS20170.1">
    <molecule id="Q64338-1"/>
</dbReference>
<dbReference type="CCDS" id="CCDS51784.1">
    <molecule id="Q64338-3"/>
</dbReference>
<dbReference type="CCDS" id="CCDS51785.1">
    <molecule id="Q64338-2"/>
</dbReference>
<dbReference type="RefSeq" id="NP_001020739.1">
    <molecule id="Q64338-2"/>
    <property type="nucleotide sequence ID" value="NM_001025568.3"/>
</dbReference>
<dbReference type="RefSeq" id="NP_001153424.1">
    <property type="nucleotide sequence ID" value="NM_001159952.1"/>
</dbReference>
<dbReference type="RefSeq" id="NP_001153425.1">
    <molecule id="Q64338-3"/>
    <property type="nucleotide sequence ID" value="NM_001159953.2"/>
</dbReference>
<dbReference type="RefSeq" id="NP_001153427.1">
    <molecule id="Q64338-1"/>
    <property type="nucleotide sequence ID" value="NM_001159955.2"/>
</dbReference>
<dbReference type="RefSeq" id="NP_001153432.1">
    <molecule id="Q64338-2"/>
    <property type="nucleotide sequence ID" value="NM_001159960.2"/>
</dbReference>
<dbReference type="RefSeq" id="NP_001342404.1">
    <molecule id="Q64338-1"/>
    <property type="nucleotide sequence ID" value="NM_001355475.2"/>
</dbReference>
<dbReference type="RefSeq" id="NP_001397182.1">
    <molecule id="Q64338-2"/>
    <property type="nucleotide sequence ID" value="NM_001410253.1"/>
</dbReference>
<dbReference type="RefSeq" id="NP_001397183.1">
    <molecule id="Q64338-2"/>
    <property type="nucleotide sequence ID" value="NM_001410254.1"/>
</dbReference>
<dbReference type="RefSeq" id="NP_035184.1">
    <molecule id="Q64338-1"/>
    <property type="nucleotide sequence ID" value="NM_011054.5"/>
</dbReference>
<dbReference type="RefSeq" id="XP_011239552.1">
    <property type="nucleotide sequence ID" value="XM_011241250.2"/>
</dbReference>
<dbReference type="RefSeq" id="XP_017176942.1">
    <property type="nucleotide sequence ID" value="XM_017321453.1"/>
</dbReference>
<dbReference type="SMR" id="Q64338"/>
<dbReference type="BioGRID" id="202076">
    <property type="interactions" value="3"/>
</dbReference>
<dbReference type="FunCoup" id="Q64338">
    <property type="interactions" value="1642"/>
</dbReference>
<dbReference type="STRING" id="10090.ENSMUSP00000046601"/>
<dbReference type="GlyGen" id="Q64338">
    <property type="glycosylation" value="1 site, 1 N-linked glycan (1 site)"/>
</dbReference>
<dbReference type="iPTMnet" id="Q64338"/>
<dbReference type="PhosphoSitePlus" id="Q64338"/>
<dbReference type="PaxDb" id="10090-ENSMUSP00000046601"/>
<dbReference type="ProteomicsDB" id="287986">
    <molecule id="Q64338-3"/>
</dbReference>
<dbReference type="ProteomicsDB" id="287987">
    <molecule id="Q64338-1"/>
</dbReference>
<dbReference type="ProteomicsDB" id="287988">
    <molecule id="Q64338-2"/>
</dbReference>
<dbReference type="Antibodypedia" id="12721">
    <property type="antibodies" value="176 antibodies from 27 providers"/>
</dbReference>
<dbReference type="DNASU" id="18575"/>
<dbReference type="Ensembl" id="ENSMUST00000044505.14">
    <molecule id="Q64338-3"/>
    <property type="protein sequence ID" value="ENSMUSP00000046601.8"/>
    <property type="gene ID" value="ENSMUSG00000004347.18"/>
</dbReference>
<dbReference type="Ensembl" id="ENSMUST00000114327.9">
    <molecule id="Q64338-1"/>
    <property type="protein sequence ID" value="ENSMUSP00000109966.3"/>
    <property type="gene ID" value="ENSMUSG00000004347.18"/>
</dbReference>
<dbReference type="Ensembl" id="ENSMUST00000164752.8">
    <molecule id="Q64338-2"/>
    <property type="protein sequence ID" value="ENSMUSP00000129185.2"/>
    <property type="gene ID" value="ENSMUSG00000004347.18"/>
</dbReference>
<dbReference type="Ensembl" id="ENSMUST00000166102.8">
    <molecule id="Q64338-2"/>
    <property type="protein sequence ID" value="ENSMUSP00000131350.2"/>
    <property type="gene ID" value="ENSMUSG00000004347.18"/>
</dbReference>
<dbReference type="Ensembl" id="ENSMUST00000168944.8">
    <molecule id="Q64338-1"/>
    <property type="protein sequence ID" value="ENSMUSP00000128364.2"/>
    <property type="gene ID" value="ENSMUSG00000004347.18"/>
</dbReference>
<dbReference type="GeneID" id="18575"/>
<dbReference type="KEGG" id="mmu:18575"/>
<dbReference type="UCSC" id="uc009caz.2">
    <molecule id="Q64338-3"/>
    <property type="organism name" value="mouse"/>
</dbReference>
<dbReference type="UCSC" id="uc009cbb.2">
    <molecule id="Q64338-1"/>
    <property type="organism name" value="mouse"/>
</dbReference>
<dbReference type="AGR" id="MGI:108413"/>
<dbReference type="CTD" id="5137"/>
<dbReference type="MGI" id="MGI:108413">
    <property type="gene designation" value="Pde1c"/>
</dbReference>
<dbReference type="VEuPathDB" id="HostDB:ENSMUSG00000004347"/>
<dbReference type="eggNOG" id="KOG3688">
    <property type="taxonomic scope" value="Eukaryota"/>
</dbReference>
<dbReference type="GeneTree" id="ENSGT00940000155331"/>
<dbReference type="InParanoid" id="Q64338"/>
<dbReference type="OMA" id="SFRLMRD"/>
<dbReference type="OrthoDB" id="189220at2759"/>
<dbReference type="PhylomeDB" id="Q64338"/>
<dbReference type="TreeFam" id="TF314638"/>
<dbReference type="Reactome" id="R-MMU-111957">
    <property type="pathway name" value="Cam-PDE 1 activation"/>
</dbReference>
<dbReference type="BioGRID-ORCS" id="18575">
    <property type="hits" value="2 hits in 77 CRISPR screens"/>
</dbReference>
<dbReference type="ChiTaRS" id="Pde1c">
    <property type="organism name" value="mouse"/>
</dbReference>
<dbReference type="PRO" id="PR:Q64338"/>
<dbReference type="Proteomes" id="UP000000589">
    <property type="component" value="Chromosome 6"/>
</dbReference>
<dbReference type="RNAct" id="Q64338">
    <property type="molecule type" value="protein"/>
</dbReference>
<dbReference type="Bgee" id="ENSMUSG00000004347">
    <property type="expression patterns" value="Expressed in lumbar dorsal root ganglion and 136 other cell types or tissues"/>
</dbReference>
<dbReference type="ExpressionAtlas" id="Q64338">
    <property type="expression patterns" value="baseline and differential"/>
</dbReference>
<dbReference type="GO" id="GO:0005929">
    <property type="term" value="C:cilium"/>
    <property type="evidence" value="ECO:0000314"/>
    <property type="project" value="MGI"/>
</dbReference>
<dbReference type="GO" id="GO:0005764">
    <property type="term" value="C:lysosome"/>
    <property type="evidence" value="ECO:0000314"/>
    <property type="project" value="UniProtKB"/>
</dbReference>
<dbReference type="GO" id="GO:0004115">
    <property type="term" value="F:3',5'-cyclic-AMP phosphodiesterase activity"/>
    <property type="evidence" value="ECO:0000314"/>
    <property type="project" value="UniProtKB"/>
</dbReference>
<dbReference type="GO" id="GO:0047555">
    <property type="term" value="F:3',5'-cyclic-GMP phosphodiesterase activity"/>
    <property type="evidence" value="ECO:0000314"/>
    <property type="project" value="UniProtKB"/>
</dbReference>
<dbReference type="GO" id="GO:0005516">
    <property type="term" value="F:calmodulin binding"/>
    <property type="evidence" value="ECO:0007669"/>
    <property type="project" value="UniProtKB-KW"/>
</dbReference>
<dbReference type="GO" id="GO:0048101">
    <property type="term" value="F:calmodulin-activated 3',5'-cyclic-GMP phosphodiesterase activity"/>
    <property type="evidence" value="ECO:0000266"/>
    <property type="project" value="MGI"/>
</dbReference>
<dbReference type="GO" id="GO:0004117">
    <property type="term" value="F:calmodulin-activated dual specificity 3',5'-cyclic-GMP, 3',5'-cyclic-AMP phosphodiesterase activity"/>
    <property type="evidence" value="ECO:0000266"/>
    <property type="project" value="MGI"/>
</dbReference>
<dbReference type="GO" id="GO:0046872">
    <property type="term" value="F:metal ion binding"/>
    <property type="evidence" value="ECO:0007669"/>
    <property type="project" value="UniProtKB-KW"/>
</dbReference>
<dbReference type="GO" id="GO:0051592">
    <property type="term" value="P:response to calcium ion"/>
    <property type="evidence" value="ECO:0000266"/>
    <property type="project" value="MGI"/>
</dbReference>
<dbReference type="GO" id="GO:0007608">
    <property type="term" value="P:sensory perception of smell"/>
    <property type="evidence" value="ECO:0000315"/>
    <property type="project" value="MGI"/>
</dbReference>
<dbReference type="GO" id="GO:0007165">
    <property type="term" value="P:signal transduction"/>
    <property type="evidence" value="ECO:0007669"/>
    <property type="project" value="InterPro"/>
</dbReference>
<dbReference type="CDD" id="cd00077">
    <property type="entry name" value="HDc"/>
    <property type="match status" value="1"/>
</dbReference>
<dbReference type="FunFam" id="1.10.1300.10:FF:000010">
    <property type="entry name" value="Phosphodiesterase"/>
    <property type="match status" value="1"/>
</dbReference>
<dbReference type="Gene3D" id="1.10.1300.10">
    <property type="entry name" value="3'5'-cyclic nucleotide phosphodiesterase, catalytic domain"/>
    <property type="match status" value="1"/>
</dbReference>
<dbReference type="InterPro" id="IPR003607">
    <property type="entry name" value="HD/PDEase_dom"/>
</dbReference>
<dbReference type="InterPro" id="IPR023088">
    <property type="entry name" value="PDEase"/>
</dbReference>
<dbReference type="InterPro" id="IPR002073">
    <property type="entry name" value="PDEase_catalytic_dom"/>
</dbReference>
<dbReference type="InterPro" id="IPR036971">
    <property type="entry name" value="PDEase_catalytic_dom_sf"/>
</dbReference>
<dbReference type="InterPro" id="IPR023174">
    <property type="entry name" value="PDEase_CS"/>
</dbReference>
<dbReference type="InterPro" id="IPR013706">
    <property type="entry name" value="PDEase_N"/>
</dbReference>
<dbReference type="PANTHER" id="PTHR11347">
    <property type="entry name" value="CYCLIC NUCLEOTIDE PHOSPHODIESTERASE"/>
    <property type="match status" value="1"/>
</dbReference>
<dbReference type="Pfam" id="PF00233">
    <property type="entry name" value="PDEase_I"/>
    <property type="match status" value="1"/>
</dbReference>
<dbReference type="Pfam" id="PF08499">
    <property type="entry name" value="PDEase_I_N"/>
    <property type="match status" value="1"/>
</dbReference>
<dbReference type="PRINTS" id="PR00387">
    <property type="entry name" value="PDIESTERASE1"/>
</dbReference>
<dbReference type="SMART" id="SM00471">
    <property type="entry name" value="HDc"/>
    <property type="match status" value="1"/>
</dbReference>
<dbReference type="SUPFAM" id="SSF109604">
    <property type="entry name" value="HD-domain/PDEase-like"/>
    <property type="match status" value="1"/>
</dbReference>
<dbReference type="PROSITE" id="PS00126">
    <property type="entry name" value="PDEASE_I_1"/>
    <property type="match status" value="1"/>
</dbReference>
<dbReference type="PROSITE" id="PS51845">
    <property type="entry name" value="PDEASE_I_2"/>
    <property type="match status" value="1"/>
</dbReference>
<name>PDE1C_MOUSE</name>
<sequence length="706" mass="80290">MESPTKEIEEFESNSLKHLQPEQIEKIWLRLRGLRKYKKTSQRLRSLVKQLERGEASVVDLKKNLEYAATVLESVYIDETRRLLDTEDELSDIQSDAVPSEVRDWLASTFTRQMGMMLRRSDEKPRFKSIVHAVQAGIFVERMYRRTSNMVGLSYPPAVIDALKDVDTWSFDVFSLNEASGDHALKFIFYELLTRYDLISRFKIPISALVSFVEALEVGYSKHKNPYHNLMHAADVTQTVHYLLYKTGVANWLTELEIFAIIFSAAIHDYEHTGTTNNFHIQTRSDPAILYNDRSVLENHHLSAAYRLLQEDEEMNILVNLSKDDWREFRTLVIEMVMATDMSCHFQQIKAMKTALQQPEAIEKPKALSLMLHTADISHPAKAWDLHHRWTMSLLEEFFRQGDREAELGLPFSPLCDRKSTMVAQSQVGFIDFIVEPTFTVLTDMTEKIVSPLIDESSQTGGTGQRRSSLNSINSSDAKRSGVKSSGSDGSAPINNSVIPVDYKSFKATWTEVVQINRERWRAKVPKEEKAKKEAEEKARLAAEEKQKEMEAKSQAEQGTTSKGEKKTSGEAKSQVNGTRKGDNPRGKNSKGEKAGEKQQNGDLKDGKNKADKKDHSNTGNESKKTDGTKKRSHGSPAPSTSSTSRITLPVIKPPLRHFKRPAYASSSYAPSVPKKTDDHPVRYKMLDQRIKMKKIQNISHHWNKK</sequence>
<organism>
    <name type="scientific">Mus musculus</name>
    <name type="common">Mouse</name>
    <dbReference type="NCBI Taxonomy" id="10090"/>
    <lineage>
        <taxon>Eukaryota</taxon>
        <taxon>Metazoa</taxon>
        <taxon>Chordata</taxon>
        <taxon>Craniata</taxon>
        <taxon>Vertebrata</taxon>
        <taxon>Euteleostomi</taxon>
        <taxon>Mammalia</taxon>
        <taxon>Eutheria</taxon>
        <taxon>Euarchontoglires</taxon>
        <taxon>Glires</taxon>
        <taxon>Rodentia</taxon>
        <taxon>Myomorpha</taxon>
        <taxon>Muroidea</taxon>
        <taxon>Muridae</taxon>
        <taxon>Murinae</taxon>
        <taxon>Mus</taxon>
        <taxon>Mus</taxon>
    </lineage>
</organism>